<gene>
    <name type="primary">yhaH</name>
    <name type="ordered locus">Z4457</name>
    <name type="ordered locus">ECs3985</name>
</gene>
<protein>
    <recommendedName>
        <fullName>Inner membrane protein YhaH</fullName>
    </recommendedName>
</protein>
<sequence length="121" mass="14281">MDWYLKVLKNYVGFRGRARRKEYWMFILVNIIFTFVLGLLDKMLGWQRAGGEGILTTIYGILVFLPWWAVQFRRLHDTDRSAWWALLFLIPFIGWLIIIVFNCQAGTPGENRFGPDPKLEP</sequence>
<reference key="1">
    <citation type="journal article" date="2001" name="Nature">
        <title>Genome sequence of enterohaemorrhagic Escherichia coli O157:H7.</title>
        <authorList>
            <person name="Perna N.T."/>
            <person name="Plunkett G. III"/>
            <person name="Burland V."/>
            <person name="Mau B."/>
            <person name="Glasner J.D."/>
            <person name="Rose D.J."/>
            <person name="Mayhew G.F."/>
            <person name="Evans P.S."/>
            <person name="Gregor J."/>
            <person name="Kirkpatrick H.A."/>
            <person name="Posfai G."/>
            <person name="Hackett J."/>
            <person name="Klink S."/>
            <person name="Boutin A."/>
            <person name="Shao Y."/>
            <person name="Miller L."/>
            <person name="Grotbeck E.J."/>
            <person name="Davis N.W."/>
            <person name="Lim A."/>
            <person name="Dimalanta E.T."/>
            <person name="Potamousis K."/>
            <person name="Apodaca J."/>
            <person name="Anantharaman T.S."/>
            <person name="Lin J."/>
            <person name="Yen G."/>
            <person name="Schwartz D.C."/>
            <person name="Welch R.A."/>
            <person name="Blattner F.R."/>
        </authorList>
    </citation>
    <scope>NUCLEOTIDE SEQUENCE [LARGE SCALE GENOMIC DNA]</scope>
    <source>
        <strain>O157:H7 / EDL933 / ATCC 700927 / EHEC</strain>
    </source>
</reference>
<reference key="2">
    <citation type="journal article" date="2001" name="DNA Res.">
        <title>Complete genome sequence of enterohemorrhagic Escherichia coli O157:H7 and genomic comparison with a laboratory strain K-12.</title>
        <authorList>
            <person name="Hayashi T."/>
            <person name="Makino K."/>
            <person name="Ohnishi M."/>
            <person name="Kurokawa K."/>
            <person name="Ishii K."/>
            <person name="Yokoyama K."/>
            <person name="Han C.-G."/>
            <person name="Ohtsubo E."/>
            <person name="Nakayama K."/>
            <person name="Murata T."/>
            <person name="Tanaka M."/>
            <person name="Tobe T."/>
            <person name="Iida T."/>
            <person name="Takami H."/>
            <person name="Honda T."/>
            <person name="Sasakawa C."/>
            <person name="Ogasawara N."/>
            <person name="Yasunaga T."/>
            <person name="Kuhara S."/>
            <person name="Shiba T."/>
            <person name="Hattori M."/>
            <person name="Shinagawa H."/>
        </authorList>
    </citation>
    <scope>NUCLEOTIDE SEQUENCE [LARGE SCALE GENOMIC DNA]</scope>
    <source>
        <strain>O157:H7 / Sakai / RIMD 0509952 / EHEC</strain>
    </source>
</reference>
<comment type="subcellular location">
    <subcellularLocation>
        <location evidence="1">Cell inner membrane</location>
        <topology evidence="1">Multi-pass membrane protein</topology>
    </subcellularLocation>
</comment>
<comment type="similarity">
    <text evidence="3">To E.coli YhaI.</text>
</comment>
<evidence type="ECO:0000250" key="1"/>
<evidence type="ECO:0000255" key="2"/>
<evidence type="ECO:0000305" key="3"/>
<proteinExistence type="inferred from homology"/>
<keyword id="KW-0997">Cell inner membrane</keyword>
<keyword id="KW-1003">Cell membrane</keyword>
<keyword id="KW-0472">Membrane</keyword>
<keyword id="KW-1185">Reference proteome</keyword>
<keyword id="KW-0812">Transmembrane</keyword>
<keyword id="KW-1133">Transmembrane helix</keyword>
<name>YHAH_ECO57</name>
<dbReference type="EMBL" id="AE005174">
    <property type="protein sequence ID" value="AAG58236.1"/>
    <property type="molecule type" value="Genomic_DNA"/>
</dbReference>
<dbReference type="EMBL" id="BA000007">
    <property type="protein sequence ID" value="BAB37408.1"/>
    <property type="molecule type" value="Genomic_DNA"/>
</dbReference>
<dbReference type="PIR" id="A91127">
    <property type="entry name" value="A91127"/>
</dbReference>
<dbReference type="PIR" id="H85971">
    <property type="entry name" value="H85971"/>
</dbReference>
<dbReference type="RefSeq" id="NP_312012.1">
    <property type="nucleotide sequence ID" value="NC_002695.1"/>
</dbReference>
<dbReference type="RefSeq" id="WP_000384145.1">
    <property type="nucleotide sequence ID" value="NZ_VOAI01000009.1"/>
</dbReference>
<dbReference type="STRING" id="155864.Z4457"/>
<dbReference type="TCDB" id="9.B.124.1.2">
    <property type="family name" value="the duf805 or pf05656 (duf805) family"/>
</dbReference>
<dbReference type="GeneID" id="916181"/>
<dbReference type="KEGG" id="ece:Z4457"/>
<dbReference type="KEGG" id="ecs:ECs_3985"/>
<dbReference type="PATRIC" id="fig|386585.9.peg.4159"/>
<dbReference type="eggNOG" id="COG3152">
    <property type="taxonomic scope" value="Bacteria"/>
</dbReference>
<dbReference type="HOGENOM" id="CLU_093674_8_0_6"/>
<dbReference type="OMA" id="WMFTLFN"/>
<dbReference type="Proteomes" id="UP000000558">
    <property type="component" value="Chromosome"/>
</dbReference>
<dbReference type="Proteomes" id="UP000002519">
    <property type="component" value="Chromosome"/>
</dbReference>
<dbReference type="GO" id="GO:0005886">
    <property type="term" value="C:plasma membrane"/>
    <property type="evidence" value="ECO:0007669"/>
    <property type="project" value="UniProtKB-SubCell"/>
</dbReference>
<dbReference type="InterPro" id="IPR008523">
    <property type="entry name" value="DUF805"/>
</dbReference>
<dbReference type="PANTHER" id="PTHR34980:SF2">
    <property type="entry name" value="INNER MEMBRANE PROTEIN YHAH-RELATED"/>
    <property type="match status" value="1"/>
</dbReference>
<dbReference type="PANTHER" id="PTHR34980">
    <property type="entry name" value="INNER MEMBRANE PROTEIN-RELATED-RELATED"/>
    <property type="match status" value="1"/>
</dbReference>
<dbReference type="Pfam" id="PF05656">
    <property type="entry name" value="DUF805"/>
    <property type="match status" value="1"/>
</dbReference>
<feature type="chain" id="PRO_0000169444" description="Inner membrane protein YhaH">
    <location>
        <begin position="1"/>
        <end position="121"/>
    </location>
</feature>
<feature type="topological domain" description="Periplasmic" evidence="2">
    <location>
        <begin position="1"/>
        <end position="23"/>
    </location>
</feature>
<feature type="transmembrane region" description="Helical" evidence="2">
    <location>
        <begin position="24"/>
        <end position="44"/>
    </location>
</feature>
<feature type="topological domain" description="Cytoplasmic" evidence="2">
    <location>
        <begin position="45"/>
        <end position="49"/>
    </location>
</feature>
<feature type="transmembrane region" description="Helical" evidence="2">
    <location>
        <begin position="50"/>
        <end position="70"/>
    </location>
</feature>
<feature type="topological domain" description="Periplasmic" evidence="2">
    <location>
        <begin position="71"/>
        <end position="80"/>
    </location>
</feature>
<feature type="transmembrane region" description="Helical" evidence="2">
    <location>
        <begin position="81"/>
        <end position="101"/>
    </location>
</feature>
<feature type="topological domain" description="Cytoplasmic" evidence="2">
    <location>
        <begin position="102"/>
        <end position="121"/>
    </location>
</feature>
<accession>P64591</accession>
<accession>P42621</accession>
<organism>
    <name type="scientific">Escherichia coli O157:H7</name>
    <dbReference type="NCBI Taxonomy" id="83334"/>
    <lineage>
        <taxon>Bacteria</taxon>
        <taxon>Pseudomonadati</taxon>
        <taxon>Pseudomonadota</taxon>
        <taxon>Gammaproteobacteria</taxon>
        <taxon>Enterobacterales</taxon>
        <taxon>Enterobacteriaceae</taxon>
        <taxon>Escherichia</taxon>
    </lineage>
</organism>